<sequence>MQTSPLLTQLMEALRCLSGVGPKSAQRMAFTLLQRDRSGGMRLAQALTRAMSEIGHCADCRTFTEQEVCNICSNPRRQENGQICVVESPADIYAIEQTGQFSGRYFVLMGHLSPLDGIGPDDIGLDRLEQRLAEEKITEVILATNPTVEGEATANYIAELCAQYDVEASRIAHGVPVGGELEMVDGTTLSHSLAGRHKIRF</sequence>
<reference key="1">
    <citation type="journal article" date="2005" name="Nucleic Acids Res.">
        <title>Genome dynamics and diversity of Shigella species, the etiologic agents of bacillary dysentery.</title>
        <authorList>
            <person name="Yang F."/>
            <person name="Yang J."/>
            <person name="Zhang X."/>
            <person name="Chen L."/>
            <person name="Jiang Y."/>
            <person name="Yan Y."/>
            <person name="Tang X."/>
            <person name="Wang J."/>
            <person name="Xiong Z."/>
            <person name="Dong J."/>
            <person name="Xue Y."/>
            <person name="Zhu Y."/>
            <person name="Xu X."/>
            <person name="Sun L."/>
            <person name="Chen S."/>
            <person name="Nie H."/>
            <person name="Peng J."/>
            <person name="Xu J."/>
            <person name="Wang Y."/>
            <person name="Yuan Z."/>
            <person name="Wen Y."/>
            <person name="Yao Z."/>
            <person name="Shen Y."/>
            <person name="Qiang B."/>
            <person name="Hou Y."/>
            <person name="Yu J."/>
            <person name="Jin Q."/>
        </authorList>
    </citation>
    <scope>NUCLEOTIDE SEQUENCE [LARGE SCALE GENOMIC DNA]</scope>
    <source>
        <strain>Sb227</strain>
    </source>
</reference>
<comment type="function">
    <text evidence="1">May play a role in DNA repair. It seems to be involved in an RecBC-independent recombinational process of DNA repair. It may act with RecF and RecO.</text>
</comment>
<comment type="similarity">
    <text evidence="1">Belongs to the RecR family.</text>
</comment>
<accession>Q325C4</accession>
<gene>
    <name evidence="1" type="primary">recR</name>
    <name type="ordered locus">SBO_0372</name>
</gene>
<feature type="chain" id="PRO_1000001611" description="Recombination protein RecR">
    <location>
        <begin position="1"/>
        <end position="201"/>
    </location>
</feature>
<feature type="domain" description="Toprim" evidence="1">
    <location>
        <begin position="81"/>
        <end position="176"/>
    </location>
</feature>
<feature type="zinc finger region" description="C4-type" evidence="1">
    <location>
        <begin position="57"/>
        <end position="72"/>
    </location>
</feature>
<organism>
    <name type="scientific">Shigella boydii serotype 4 (strain Sb227)</name>
    <dbReference type="NCBI Taxonomy" id="300268"/>
    <lineage>
        <taxon>Bacteria</taxon>
        <taxon>Pseudomonadati</taxon>
        <taxon>Pseudomonadota</taxon>
        <taxon>Gammaproteobacteria</taxon>
        <taxon>Enterobacterales</taxon>
        <taxon>Enterobacteriaceae</taxon>
        <taxon>Shigella</taxon>
    </lineage>
</organism>
<evidence type="ECO:0000255" key="1">
    <source>
        <dbReference type="HAMAP-Rule" id="MF_00017"/>
    </source>
</evidence>
<proteinExistence type="inferred from homology"/>
<name>RECR_SHIBS</name>
<keyword id="KW-0227">DNA damage</keyword>
<keyword id="KW-0233">DNA recombination</keyword>
<keyword id="KW-0234">DNA repair</keyword>
<keyword id="KW-0479">Metal-binding</keyword>
<keyword id="KW-0862">Zinc</keyword>
<keyword id="KW-0863">Zinc-finger</keyword>
<protein>
    <recommendedName>
        <fullName evidence="1">Recombination protein RecR</fullName>
    </recommendedName>
</protein>
<dbReference type="EMBL" id="CP000036">
    <property type="protein sequence ID" value="ABB65084.1"/>
    <property type="molecule type" value="Genomic_DNA"/>
</dbReference>
<dbReference type="RefSeq" id="WP_001195032.1">
    <property type="nucleotide sequence ID" value="NC_007613.1"/>
</dbReference>
<dbReference type="SMR" id="Q325C4"/>
<dbReference type="KEGG" id="sbo:SBO_0372"/>
<dbReference type="HOGENOM" id="CLU_060739_1_2_6"/>
<dbReference type="Proteomes" id="UP000007067">
    <property type="component" value="Chromosome"/>
</dbReference>
<dbReference type="GO" id="GO:0003677">
    <property type="term" value="F:DNA binding"/>
    <property type="evidence" value="ECO:0007669"/>
    <property type="project" value="UniProtKB-UniRule"/>
</dbReference>
<dbReference type="GO" id="GO:0008270">
    <property type="term" value="F:zinc ion binding"/>
    <property type="evidence" value="ECO:0007669"/>
    <property type="project" value="UniProtKB-KW"/>
</dbReference>
<dbReference type="GO" id="GO:0006310">
    <property type="term" value="P:DNA recombination"/>
    <property type="evidence" value="ECO:0007669"/>
    <property type="project" value="UniProtKB-UniRule"/>
</dbReference>
<dbReference type="GO" id="GO:0006281">
    <property type="term" value="P:DNA repair"/>
    <property type="evidence" value="ECO:0007669"/>
    <property type="project" value="UniProtKB-UniRule"/>
</dbReference>
<dbReference type="CDD" id="cd01025">
    <property type="entry name" value="TOPRIM_recR"/>
    <property type="match status" value="1"/>
</dbReference>
<dbReference type="FunFam" id="1.10.8.420:FF:000001">
    <property type="entry name" value="Recombination protein RecR"/>
    <property type="match status" value="1"/>
</dbReference>
<dbReference type="FunFam" id="3.40.1360.10:FF:000001">
    <property type="entry name" value="Recombination protein RecR"/>
    <property type="match status" value="1"/>
</dbReference>
<dbReference type="Gene3D" id="3.40.1360.10">
    <property type="match status" value="1"/>
</dbReference>
<dbReference type="Gene3D" id="6.10.250.240">
    <property type="match status" value="1"/>
</dbReference>
<dbReference type="Gene3D" id="1.10.8.420">
    <property type="entry name" value="RecR Domain 1"/>
    <property type="match status" value="1"/>
</dbReference>
<dbReference type="HAMAP" id="MF_00017">
    <property type="entry name" value="RecR"/>
    <property type="match status" value="1"/>
</dbReference>
<dbReference type="InterPro" id="IPR000093">
    <property type="entry name" value="DNA_Rcmb_RecR"/>
</dbReference>
<dbReference type="InterPro" id="IPR023627">
    <property type="entry name" value="Rcmb_RecR"/>
</dbReference>
<dbReference type="InterPro" id="IPR015967">
    <property type="entry name" value="Rcmb_RecR_Znf"/>
</dbReference>
<dbReference type="InterPro" id="IPR006171">
    <property type="entry name" value="TOPRIM_dom"/>
</dbReference>
<dbReference type="InterPro" id="IPR034137">
    <property type="entry name" value="TOPRIM_RecR"/>
</dbReference>
<dbReference type="NCBIfam" id="TIGR00615">
    <property type="entry name" value="recR"/>
    <property type="match status" value="1"/>
</dbReference>
<dbReference type="PANTHER" id="PTHR30446">
    <property type="entry name" value="RECOMBINATION PROTEIN RECR"/>
    <property type="match status" value="1"/>
</dbReference>
<dbReference type="PANTHER" id="PTHR30446:SF0">
    <property type="entry name" value="RECOMBINATION PROTEIN RECR"/>
    <property type="match status" value="1"/>
</dbReference>
<dbReference type="Pfam" id="PF21175">
    <property type="entry name" value="RecR_C"/>
    <property type="match status" value="1"/>
</dbReference>
<dbReference type="Pfam" id="PF21176">
    <property type="entry name" value="RecR_HhH"/>
    <property type="match status" value="1"/>
</dbReference>
<dbReference type="Pfam" id="PF02132">
    <property type="entry name" value="RecR_ZnF"/>
    <property type="match status" value="1"/>
</dbReference>
<dbReference type="Pfam" id="PF13662">
    <property type="entry name" value="Toprim_4"/>
    <property type="match status" value="1"/>
</dbReference>
<dbReference type="SMART" id="SM00493">
    <property type="entry name" value="TOPRIM"/>
    <property type="match status" value="1"/>
</dbReference>
<dbReference type="SUPFAM" id="SSF111304">
    <property type="entry name" value="Recombination protein RecR"/>
    <property type="match status" value="1"/>
</dbReference>
<dbReference type="PROSITE" id="PS01300">
    <property type="entry name" value="RECR"/>
    <property type="match status" value="1"/>
</dbReference>
<dbReference type="PROSITE" id="PS50880">
    <property type="entry name" value="TOPRIM"/>
    <property type="match status" value="1"/>
</dbReference>